<accession>Q8LFP1</accession>
<accession>Q9T078</accession>
<name>PRA1H_ARATH</name>
<evidence type="ECO:0000250" key="1"/>
<evidence type="ECO:0000255" key="2"/>
<evidence type="ECO:0000269" key="3">
    <source>
    </source>
</evidence>
<evidence type="ECO:0000305" key="4"/>
<dbReference type="EMBL" id="AL035602">
    <property type="protein sequence ID" value="CAB38266.1"/>
    <property type="status" value="ALT_SEQ"/>
    <property type="molecule type" value="Genomic_DNA"/>
</dbReference>
<dbReference type="EMBL" id="AL161571">
    <property type="protein sequence ID" value="CAB81404.1"/>
    <property type="status" value="ALT_SEQ"/>
    <property type="molecule type" value="Genomic_DNA"/>
</dbReference>
<dbReference type="EMBL" id="CP002687">
    <property type="protein sequence ID" value="AEE85355.1"/>
    <property type="molecule type" value="Genomic_DNA"/>
</dbReference>
<dbReference type="EMBL" id="BT025167">
    <property type="protein sequence ID" value="ABE77405.1"/>
    <property type="molecule type" value="mRNA"/>
</dbReference>
<dbReference type="EMBL" id="AY084728">
    <property type="protein sequence ID" value="AAM61302.1"/>
    <property type="molecule type" value="mRNA"/>
</dbReference>
<dbReference type="PIR" id="T05859">
    <property type="entry name" value="T05859"/>
</dbReference>
<dbReference type="FunCoup" id="Q8LFP1">
    <property type="interactions" value="1303"/>
</dbReference>
<dbReference type="STRING" id="3702.Q8LFP1"/>
<dbReference type="PaxDb" id="3702-AT4G27540.1"/>
<dbReference type="EnsemblPlants" id="AT4G27540.1">
    <property type="protein sequence ID" value="AT4G27540.1"/>
    <property type="gene ID" value="AT4G27540"/>
</dbReference>
<dbReference type="GeneID" id="828863"/>
<dbReference type="Gramene" id="AT4G27540.1">
    <property type="protein sequence ID" value="AT4G27540.1"/>
    <property type="gene ID" value="AT4G27540"/>
</dbReference>
<dbReference type="KEGG" id="ath:AT4G27540"/>
<dbReference type="Araport" id="AT4G27540"/>
<dbReference type="TAIR" id="AT4G27540">
    <property type="gene designation" value="PRA1.H"/>
</dbReference>
<dbReference type="eggNOG" id="ENOG502QTYE">
    <property type="taxonomic scope" value="Eukaryota"/>
</dbReference>
<dbReference type="HOGENOM" id="CLU_084908_0_0_1"/>
<dbReference type="InParanoid" id="Q8LFP1"/>
<dbReference type="OMA" id="IVMILHA"/>
<dbReference type="PhylomeDB" id="Q8LFP1"/>
<dbReference type="PRO" id="PR:Q8LFP1"/>
<dbReference type="Proteomes" id="UP000006548">
    <property type="component" value="Chromosome 4"/>
</dbReference>
<dbReference type="ExpressionAtlas" id="Q8LFP1">
    <property type="expression patterns" value="baseline and differential"/>
</dbReference>
<dbReference type="GO" id="GO:0005783">
    <property type="term" value="C:endoplasmic reticulum"/>
    <property type="evidence" value="ECO:0000314"/>
    <property type="project" value="TAIR"/>
</dbReference>
<dbReference type="GO" id="GO:0005789">
    <property type="term" value="C:endoplasmic reticulum membrane"/>
    <property type="evidence" value="ECO:0007669"/>
    <property type="project" value="UniProtKB-SubCell"/>
</dbReference>
<dbReference type="GO" id="GO:0016192">
    <property type="term" value="P:vesicle-mediated transport"/>
    <property type="evidence" value="ECO:0000314"/>
    <property type="project" value="TAIR"/>
</dbReference>
<dbReference type="InterPro" id="IPR004895">
    <property type="entry name" value="Prenylated_rab_accept_PRA1"/>
</dbReference>
<dbReference type="PANTHER" id="PTHR19317:SF1">
    <property type="entry name" value="PRA1 FAMILY PROTEIN H"/>
    <property type="match status" value="1"/>
</dbReference>
<dbReference type="PANTHER" id="PTHR19317">
    <property type="entry name" value="PRENYLATED RAB ACCEPTOR 1-RELATED"/>
    <property type="match status" value="1"/>
</dbReference>
<dbReference type="Pfam" id="PF03208">
    <property type="entry name" value="PRA1"/>
    <property type="match status" value="1"/>
</dbReference>
<comment type="function">
    <text evidence="1">May be involved in both secretory and endocytic intracellular trafficking in the endosomal/prevacuolar compartments.</text>
</comment>
<comment type="subcellular location">
    <subcellularLocation>
        <location evidence="3">Endoplasmic reticulum membrane</location>
        <topology evidence="3">Multi-pass membrane protein</topology>
    </subcellularLocation>
</comment>
<comment type="similarity">
    <text evidence="4">Belongs to the PRA1 family.</text>
</comment>
<comment type="sequence caution" evidence="4">
    <conflict type="erroneous gene model prediction">
        <sequence resource="EMBL-CDS" id="CAB38266"/>
    </conflict>
</comment>
<comment type="sequence caution" evidence="4">
    <conflict type="erroneous gene model prediction">
        <sequence resource="EMBL-CDS" id="CAB81404"/>
    </conflict>
</comment>
<reference key="1">
    <citation type="journal article" date="1999" name="Nature">
        <title>Sequence and analysis of chromosome 4 of the plant Arabidopsis thaliana.</title>
        <authorList>
            <person name="Mayer K.F.X."/>
            <person name="Schueller C."/>
            <person name="Wambutt R."/>
            <person name="Murphy G."/>
            <person name="Volckaert G."/>
            <person name="Pohl T."/>
            <person name="Duesterhoeft A."/>
            <person name="Stiekema W."/>
            <person name="Entian K.-D."/>
            <person name="Terryn N."/>
            <person name="Harris B."/>
            <person name="Ansorge W."/>
            <person name="Brandt P."/>
            <person name="Grivell L.A."/>
            <person name="Rieger M."/>
            <person name="Weichselgartner M."/>
            <person name="de Simone V."/>
            <person name="Obermaier B."/>
            <person name="Mache R."/>
            <person name="Mueller M."/>
            <person name="Kreis M."/>
            <person name="Delseny M."/>
            <person name="Puigdomenech P."/>
            <person name="Watson M."/>
            <person name="Schmidtheini T."/>
            <person name="Reichert B."/>
            <person name="Portetelle D."/>
            <person name="Perez-Alonso M."/>
            <person name="Boutry M."/>
            <person name="Bancroft I."/>
            <person name="Vos P."/>
            <person name="Hoheisel J."/>
            <person name="Zimmermann W."/>
            <person name="Wedler H."/>
            <person name="Ridley P."/>
            <person name="Langham S.-A."/>
            <person name="McCullagh B."/>
            <person name="Bilham L."/>
            <person name="Robben J."/>
            <person name="van der Schueren J."/>
            <person name="Grymonprez B."/>
            <person name="Chuang Y.-J."/>
            <person name="Vandenbussche F."/>
            <person name="Braeken M."/>
            <person name="Weltjens I."/>
            <person name="Voet M."/>
            <person name="Bastiaens I."/>
            <person name="Aert R."/>
            <person name="Defoor E."/>
            <person name="Weitzenegger T."/>
            <person name="Bothe G."/>
            <person name="Ramsperger U."/>
            <person name="Hilbert H."/>
            <person name="Braun M."/>
            <person name="Holzer E."/>
            <person name="Brandt A."/>
            <person name="Peters S."/>
            <person name="van Staveren M."/>
            <person name="Dirkse W."/>
            <person name="Mooijman P."/>
            <person name="Klein Lankhorst R."/>
            <person name="Rose M."/>
            <person name="Hauf J."/>
            <person name="Koetter P."/>
            <person name="Berneiser S."/>
            <person name="Hempel S."/>
            <person name="Feldpausch M."/>
            <person name="Lamberth S."/>
            <person name="Van den Daele H."/>
            <person name="De Keyser A."/>
            <person name="Buysshaert C."/>
            <person name="Gielen J."/>
            <person name="Villarroel R."/>
            <person name="De Clercq R."/>
            <person name="van Montagu M."/>
            <person name="Rogers J."/>
            <person name="Cronin A."/>
            <person name="Quail M.A."/>
            <person name="Bray-Allen S."/>
            <person name="Clark L."/>
            <person name="Doggett J."/>
            <person name="Hall S."/>
            <person name="Kay M."/>
            <person name="Lennard N."/>
            <person name="McLay K."/>
            <person name="Mayes R."/>
            <person name="Pettett A."/>
            <person name="Rajandream M.A."/>
            <person name="Lyne M."/>
            <person name="Benes V."/>
            <person name="Rechmann S."/>
            <person name="Borkova D."/>
            <person name="Bloecker H."/>
            <person name="Scharfe M."/>
            <person name="Grimm M."/>
            <person name="Loehnert T.-H."/>
            <person name="Dose S."/>
            <person name="de Haan M."/>
            <person name="Maarse A.C."/>
            <person name="Schaefer M."/>
            <person name="Mueller-Auer S."/>
            <person name="Gabel C."/>
            <person name="Fuchs M."/>
            <person name="Fartmann B."/>
            <person name="Granderath K."/>
            <person name="Dauner D."/>
            <person name="Herzl A."/>
            <person name="Neumann S."/>
            <person name="Argiriou A."/>
            <person name="Vitale D."/>
            <person name="Liguori R."/>
            <person name="Piravandi E."/>
            <person name="Massenet O."/>
            <person name="Quigley F."/>
            <person name="Clabauld G."/>
            <person name="Muendlein A."/>
            <person name="Felber R."/>
            <person name="Schnabl S."/>
            <person name="Hiller R."/>
            <person name="Schmidt W."/>
            <person name="Lecharny A."/>
            <person name="Aubourg S."/>
            <person name="Chefdor F."/>
            <person name="Cooke R."/>
            <person name="Berger C."/>
            <person name="Monfort A."/>
            <person name="Casacuberta E."/>
            <person name="Gibbons T."/>
            <person name="Weber N."/>
            <person name="Vandenbol M."/>
            <person name="Bargues M."/>
            <person name="Terol J."/>
            <person name="Torres A."/>
            <person name="Perez-Perez A."/>
            <person name="Purnelle B."/>
            <person name="Bent E."/>
            <person name="Johnson S."/>
            <person name="Tacon D."/>
            <person name="Jesse T."/>
            <person name="Heijnen L."/>
            <person name="Schwarz S."/>
            <person name="Scholler P."/>
            <person name="Heber S."/>
            <person name="Francs P."/>
            <person name="Bielke C."/>
            <person name="Frishman D."/>
            <person name="Haase D."/>
            <person name="Lemcke K."/>
            <person name="Mewes H.-W."/>
            <person name="Stocker S."/>
            <person name="Zaccaria P."/>
            <person name="Bevan M."/>
            <person name="Wilson R.K."/>
            <person name="de la Bastide M."/>
            <person name="Habermann K."/>
            <person name="Parnell L."/>
            <person name="Dedhia N."/>
            <person name="Gnoj L."/>
            <person name="Schutz K."/>
            <person name="Huang E."/>
            <person name="Spiegel L."/>
            <person name="Sekhon M."/>
            <person name="Murray J."/>
            <person name="Sheet P."/>
            <person name="Cordes M."/>
            <person name="Abu-Threideh J."/>
            <person name="Stoneking T."/>
            <person name="Kalicki J."/>
            <person name="Graves T."/>
            <person name="Harmon G."/>
            <person name="Edwards J."/>
            <person name="Latreille P."/>
            <person name="Courtney L."/>
            <person name="Cloud J."/>
            <person name="Abbott A."/>
            <person name="Scott K."/>
            <person name="Johnson D."/>
            <person name="Minx P."/>
            <person name="Bentley D."/>
            <person name="Fulton B."/>
            <person name="Miller N."/>
            <person name="Greco T."/>
            <person name="Kemp K."/>
            <person name="Kramer J."/>
            <person name="Fulton L."/>
            <person name="Mardis E."/>
            <person name="Dante M."/>
            <person name="Pepin K."/>
            <person name="Hillier L.W."/>
            <person name="Nelson J."/>
            <person name="Spieth J."/>
            <person name="Ryan E."/>
            <person name="Andrews S."/>
            <person name="Geisel C."/>
            <person name="Layman D."/>
            <person name="Du H."/>
            <person name="Ali J."/>
            <person name="Berghoff A."/>
            <person name="Jones K."/>
            <person name="Drone K."/>
            <person name="Cotton M."/>
            <person name="Joshu C."/>
            <person name="Antonoiu B."/>
            <person name="Zidanic M."/>
            <person name="Strong C."/>
            <person name="Sun H."/>
            <person name="Lamar B."/>
            <person name="Yordan C."/>
            <person name="Ma P."/>
            <person name="Zhong J."/>
            <person name="Preston R."/>
            <person name="Vil D."/>
            <person name="Shekher M."/>
            <person name="Matero A."/>
            <person name="Shah R."/>
            <person name="Swaby I.K."/>
            <person name="O'Shaughnessy A."/>
            <person name="Rodriguez M."/>
            <person name="Hoffman J."/>
            <person name="Till S."/>
            <person name="Granat S."/>
            <person name="Shohdy N."/>
            <person name="Hasegawa A."/>
            <person name="Hameed A."/>
            <person name="Lodhi M."/>
            <person name="Johnson A."/>
            <person name="Chen E."/>
            <person name="Marra M.A."/>
            <person name="Martienssen R."/>
            <person name="McCombie W.R."/>
        </authorList>
    </citation>
    <scope>NUCLEOTIDE SEQUENCE [LARGE SCALE GENOMIC DNA]</scope>
    <source>
        <strain>cv. Columbia</strain>
    </source>
</reference>
<reference key="2">
    <citation type="journal article" date="2017" name="Plant J.">
        <title>Araport11: a complete reannotation of the Arabidopsis thaliana reference genome.</title>
        <authorList>
            <person name="Cheng C.Y."/>
            <person name="Krishnakumar V."/>
            <person name="Chan A.P."/>
            <person name="Thibaud-Nissen F."/>
            <person name="Schobel S."/>
            <person name="Town C.D."/>
        </authorList>
    </citation>
    <scope>GENOME REANNOTATION</scope>
    <source>
        <strain>cv. Columbia</strain>
    </source>
</reference>
<reference key="3">
    <citation type="submission" date="2006-04" db="EMBL/GenBank/DDBJ databases">
        <title>Arabidopsis ORF clones.</title>
        <authorList>
            <person name="Shinn P."/>
            <person name="Chen H."/>
            <person name="Kim C.J."/>
            <person name="Ecker J.R."/>
        </authorList>
    </citation>
    <scope>NUCLEOTIDE SEQUENCE [LARGE SCALE MRNA]</scope>
    <source>
        <strain>cv. Columbia</strain>
    </source>
</reference>
<reference key="4">
    <citation type="submission" date="2002-03" db="EMBL/GenBank/DDBJ databases">
        <title>Full-length cDNA from Arabidopsis thaliana.</title>
        <authorList>
            <person name="Brover V.V."/>
            <person name="Troukhan M.E."/>
            <person name="Alexandrov N.A."/>
            <person name="Lu Y.-P."/>
            <person name="Flavell R.B."/>
            <person name="Feldmann K.A."/>
        </authorList>
    </citation>
    <scope>NUCLEOTIDE SEQUENCE [LARGE SCALE MRNA]</scope>
</reference>
<reference key="5">
    <citation type="journal article" date="2008" name="Plant Physiol.">
        <title>The PRA1 gene family in Arabidopsis.</title>
        <authorList>
            <person name="Alvim Kamei C.L."/>
            <person name="Boruc J."/>
            <person name="Vandepoele K."/>
            <person name="Van den Daele H."/>
            <person name="Maes S."/>
            <person name="Russinova E."/>
            <person name="Inze D."/>
            <person name="de Veylder L."/>
        </authorList>
    </citation>
    <scope>SUBCELLULAR LOCATION</scope>
    <scope>GENE FAMILY</scope>
    <scope>NOMENCLATURE</scope>
</reference>
<protein>
    <recommendedName>
        <fullName>PRA1 family protein H</fullName>
        <shortName>AtPRA1.H</shortName>
    </recommendedName>
</protein>
<sequence>MAFSPNPLSLSVPDPAFESWLRDSGYLELLDHRTSAAAAAASSSASVSSSAAATSAASDDVVSSITGGFFASLLSRLVTVSSLLTINPFSKLSADDFSGDTTPWTTGFIGNCDSYSFPSSSQQARMRVHENIKRFARNYATLFIVFFACALYQMPLALVGLLGSLALWELFKYCSDKWKFDRHPSMRKLSIGIGQCATAVLLTFLNVQMALFSALAISYSVMILHAGFRKLTPSKKPTRGR</sequence>
<organism>
    <name type="scientific">Arabidopsis thaliana</name>
    <name type="common">Mouse-ear cress</name>
    <dbReference type="NCBI Taxonomy" id="3702"/>
    <lineage>
        <taxon>Eukaryota</taxon>
        <taxon>Viridiplantae</taxon>
        <taxon>Streptophyta</taxon>
        <taxon>Embryophyta</taxon>
        <taxon>Tracheophyta</taxon>
        <taxon>Spermatophyta</taxon>
        <taxon>Magnoliopsida</taxon>
        <taxon>eudicotyledons</taxon>
        <taxon>Gunneridae</taxon>
        <taxon>Pentapetalae</taxon>
        <taxon>rosids</taxon>
        <taxon>malvids</taxon>
        <taxon>Brassicales</taxon>
        <taxon>Brassicaceae</taxon>
        <taxon>Camelineae</taxon>
        <taxon>Arabidopsis</taxon>
    </lineage>
</organism>
<proteinExistence type="evidence at transcript level"/>
<feature type="chain" id="PRO_0000352265" description="PRA1 family protein H">
    <location>
        <begin position="1"/>
        <end position="241"/>
    </location>
</feature>
<feature type="transmembrane region" description="Helical" evidence="2">
    <location>
        <begin position="142"/>
        <end position="162"/>
    </location>
</feature>
<feature type="transmembrane region" description="Helical" evidence="2">
    <location>
        <begin position="189"/>
        <end position="205"/>
    </location>
</feature>
<feature type="transmembrane region" description="Helical" evidence="2">
    <location>
        <begin position="209"/>
        <end position="228"/>
    </location>
</feature>
<gene>
    <name type="primary">PRA1H</name>
    <name type="ordered locus">At4g27540</name>
    <name type="ORF">T29A15.30</name>
</gene>
<keyword id="KW-0256">Endoplasmic reticulum</keyword>
<keyword id="KW-0472">Membrane</keyword>
<keyword id="KW-1185">Reference proteome</keyword>
<keyword id="KW-0812">Transmembrane</keyword>
<keyword id="KW-1133">Transmembrane helix</keyword>
<keyword id="KW-0813">Transport</keyword>